<evidence type="ECO:0000255" key="1">
    <source>
        <dbReference type="HAMAP-Rule" id="MF_00576"/>
    </source>
</evidence>
<evidence type="ECO:0000256" key="2">
    <source>
        <dbReference type="SAM" id="MobiDB-lite"/>
    </source>
</evidence>
<comment type="function">
    <text evidence="1">Gas vesicles are hollow, gas filled proteinaceous nanostructures found in some microorganisms. During planktonic growth they allow positioning of the organism at a favorable depth for light or nutrient acquisition. GvpA forms the protein shell.</text>
</comment>
<comment type="subunit">
    <text evidence="1">The gas vesicle shell is 2 nm thick and consists of a single layer of this protein. It forms helical ribs nearly perpendicular to the long axis of the vesicle.</text>
</comment>
<comment type="subcellular location">
    <subcellularLocation>
        <location evidence="1">Gas vesicle shell</location>
    </subcellularLocation>
</comment>
<comment type="similarity">
    <text evidence="1">Belongs to the gas vesicle GvpA family.</text>
</comment>
<proteinExistence type="inferred from homology"/>
<keyword id="KW-0304">Gas vesicle</keyword>
<reference key="1">
    <citation type="submission" date="2006-12" db="EMBL/GenBank/DDBJ databases">
        <title>Complete sequence of chromosome of Mycobacterium sp. KMS.</title>
        <authorList>
            <consortium name="US DOE Joint Genome Institute"/>
            <person name="Copeland A."/>
            <person name="Lucas S."/>
            <person name="Lapidus A."/>
            <person name="Barry K."/>
            <person name="Detter J.C."/>
            <person name="Glavina del Rio T."/>
            <person name="Hammon N."/>
            <person name="Israni S."/>
            <person name="Dalin E."/>
            <person name="Tice H."/>
            <person name="Pitluck S."/>
            <person name="Kiss H."/>
            <person name="Brettin T."/>
            <person name="Bruce D."/>
            <person name="Han C."/>
            <person name="Tapia R."/>
            <person name="Gilna P."/>
            <person name="Schmutz J."/>
            <person name="Larimer F."/>
            <person name="Land M."/>
            <person name="Hauser L."/>
            <person name="Kyrpides N."/>
            <person name="Mikhailova N."/>
            <person name="Miller C.D."/>
            <person name="Richardson P."/>
        </authorList>
    </citation>
    <scope>NUCLEOTIDE SEQUENCE [LARGE SCALE GENOMIC DNA]</scope>
    <source>
        <strain>KMS</strain>
    </source>
</reference>
<organism>
    <name type="scientific">Mycobacterium sp. (strain KMS)</name>
    <dbReference type="NCBI Taxonomy" id="189918"/>
    <lineage>
        <taxon>Bacteria</taxon>
        <taxon>Bacillati</taxon>
        <taxon>Actinomycetota</taxon>
        <taxon>Actinomycetes</taxon>
        <taxon>Mycobacteriales</taxon>
        <taxon>Mycobacteriaceae</taxon>
        <taxon>Mycobacterium</taxon>
    </lineage>
</organism>
<sequence length="139" mass="14329">MSTAIQPAGTAGGGGSDSNGLADVVDTILDKGLVLDAYVRVSVVGIEILTVDARVVVASVDTYLRYADAVNRLDIVNEDPKSDLGGLVGDVAESATSGVAKGKTTGVLEAAGEKLGDMLTSDEPEPRKATRVRSRRADR</sequence>
<accession>A1UFH1</accession>
<feature type="chain" id="PRO_1000025108" description="Gas vesicle protein A">
    <location>
        <begin position="1"/>
        <end position="139"/>
    </location>
</feature>
<feature type="region of interest" description="Disordered" evidence="2">
    <location>
        <begin position="113"/>
        <end position="139"/>
    </location>
</feature>
<feature type="compositionally biased region" description="Basic residues" evidence="2">
    <location>
        <begin position="129"/>
        <end position="139"/>
    </location>
</feature>
<name>GVPA_MYCSK</name>
<protein>
    <recommendedName>
        <fullName evidence="1">Gas vesicle protein A</fullName>
        <shortName evidence="1">GvpA</shortName>
    </recommendedName>
</protein>
<dbReference type="EMBL" id="CP000518">
    <property type="protein sequence ID" value="ABL91579.1"/>
    <property type="molecule type" value="Genomic_DNA"/>
</dbReference>
<dbReference type="SMR" id="A1UFH1"/>
<dbReference type="STRING" id="189918.Mkms_2381"/>
<dbReference type="KEGG" id="mkm:Mkms_2381"/>
<dbReference type="HOGENOM" id="CLU_117660_0_0_11"/>
<dbReference type="OrthoDB" id="284387at2"/>
<dbReference type="GO" id="GO:0033172">
    <property type="term" value="C:gas vesicle shell"/>
    <property type="evidence" value="ECO:0007669"/>
    <property type="project" value="UniProtKB-UniRule"/>
</dbReference>
<dbReference type="GO" id="GO:0012506">
    <property type="term" value="C:vesicle membrane"/>
    <property type="evidence" value="ECO:0007669"/>
    <property type="project" value="InterPro"/>
</dbReference>
<dbReference type="GO" id="GO:0005198">
    <property type="term" value="F:structural molecule activity"/>
    <property type="evidence" value="ECO:0007669"/>
    <property type="project" value="InterPro"/>
</dbReference>
<dbReference type="HAMAP" id="MF_00576">
    <property type="entry name" value="Gas_vesicle_A"/>
    <property type="match status" value="1"/>
</dbReference>
<dbReference type="InterPro" id="IPR000638">
    <property type="entry name" value="Gas-vesicle_GvpA-like"/>
</dbReference>
<dbReference type="InterPro" id="IPR047870">
    <property type="entry name" value="Gas_vesicle_GvpA"/>
</dbReference>
<dbReference type="InterPro" id="IPR050530">
    <property type="entry name" value="GvpA"/>
</dbReference>
<dbReference type="InterPro" id="IPR018493">
    <property type="entry name" value="GvpA-like_CS"/>
</dbReference>
<dbReference type="NCBIfam" id="NF006872">
    <property type="entry name" value="PRK09368.1"/>
    <property type="match status" value="1"/>
</dbReference>
<dbReference type="PANTHER" id="PTHR35344:SF4">
    <property type="entry name" value="GAS VESICLE PROTEIN A1"/>
    <property type="match status" value="1"/>
</dbReference>
<dbReference type="PANTHER" id="PTHR35344">
    <property type="entry name" value="GAS VESICLE STRUCTURAL PROTEIN 2-RELATED"/>
    <property type="match status" value="1"/>
</dbReference>
<dbReference type="Pfam" id="PF00741">
    <property type="entry name" value="Gas_vesicle"/>
    <property type="match status" value="1"/>
</dbReference>
<dbReference type="PROSITE" id="PS00234">
    <property type="entry name" value="GAS_VESICLE_A_1"/>
    <property type="match status" value="1"/>
</dbReference>
<dbReference type="PROSITE" id="PS00669">
    <property type="entry name" value="GAS_VESICLE_A_2"/>
    <property type="match status" value="1"/>
</dbReference>
<gene>
    <name evidence="1" type="primary">gvpA</name>
    <name type="ordered locus">Mkms_2381</name>
</gene>